<sequence>MGKFQVISHPLIQHKLSILRRTSTSTKDFRELVNEIAMLMGYEVLRDLPLEDVEIETPITKTVQKQIAGKKLAIVPILRAGVGMVDGLLSLVPAAKVGHIGMYRDEETLQPVEYLVKLPEDIDQRHIFVVDPMLATGGSAILAVDSLKKRGASNIKFVALVSAPEGVKALQDAHPDIDIYTAALDEKLNEKGYIVPGLGDAGDRLFGTK</sequence>
<keyword id="KW-0021">Allosteric enzyme</keyword>
<keyword id="KW-0328">Glycosyltransferase</keyword>
<keyword id="KW-0342">GTP-binding</keyword>
<keyword id="KW-0460">Magnesium</keyword>
<keyword id="KW-0547">Nucleotide-binding</keyword>
<keyword id="KW-0808">Transferase</keyword>
<reference key="1">
    <citation type="journal article" date="2007" name="PLoS ONE">
        <title>A glimpse of streptococcal toxic shock syndrome from comparative genomics of S. suis 2 Chinese isolates.</title>
        <authorList>
            <person name="Chen C."/>
            <person name="Tang J."/>
            <person name="Dong W."/>
            <person name="Wang C."/>
            <person name="Feng Y."/>
            <person name="Wang J."/>
            <person name="Zheng F."/>
            <person name="Pan X."/>
            <person name="Liu D."/>
            <person name="Li M."/>
            <person name="Song Y."/>
            <person name="Zhu X."/>
            <person name="Sun H."/>
            <person name="Feng T."/>
            <person name="Guo Z."/>
            <person name="Ju A."/>
            <person name="Ge J."/>
            <person name="Dong Y."/>
            <person name="Sun W."/>
            <person name="Jiang Y."/>
            <person name="Wang J."/>
            <person name="Yan J."/>
            <person name="Yang H."/>
            <person name="Wang X."/>
            <person name="Gao G.F."/>
            <person name="Yang R."/>
            <person name="Wang J."/>
            <person name="Yu J."/>
        </authorList>
    </citation>
    <scope>NUCLEOTIDE SEQUENCE [LARGE SCALE GENOMIC DNA]</scope>
    <source>
        <strain>05ZYH33</strain>
    </source>
</reference>
<gene>
    <name evidence="1" type="primary">upp</name>
    <name type="ordered locus">SSU05_1553</name>
</gene>
<feature type="chain" id="PRO_1000053801" description="Uracil phosphoribosyltransferase">
    <location>
        <begin position="1"/>
        <end position="209"/>
    </location>
</feature>
<feature type="binding site" evidence="1">
    <location>
        <position position="79"/>
    </location>
    <ligand>
        <name>5-phospho-alpha-D-ribose 1-diphosphate</name>
        <dbReference type="ChEBI" id="CHEBI:58017"/>
    </ligand>
</feature>
<feature type="binding site" evidence="1">
    <location>
        <position position="104"/>
    </location>
    <ligand>
        <name>5-phospho-alpha-D-ribose 1-diphosphate</name>
        <dbReference type="ChEBI" id="CHEBI:58017"/>
    </ligand>
</feature>
<feature type="binding site" evidence="1">
    <location>
        <begin position="131"/>
        <end position="139"/>
    </location>
    <ligand>
        <name>5-phospho-alpha-D-ribose 1-diphosphate</name>
        <dbReference type="ChEBI" id="CHEBI:58017"/>
    </ligand>
</feature>
<feature type="binding site" evidence="1">
    <location>
        <position position="194"/>
    </location>
    <ligand>
        <name>uracil</name>
        <dbReference type="ChEBI" id="CHEBI:17568"/>
    </ligand>
</feature>
<feature type="binding site" evidence="1">
    <location>
        <begin position="199"/>
        <end position="201"/>
    </location>
    <ligand>
        <name>uracil</name>
        <dbReference type="ChEBI" id="CHEBI:17568"/>
    </ligand>
</feature>
<feature type="binding site" evidence="1">
    <location>
        <position position="200"/>
    </location>
    <ligand>
        <name>5-phospho-alpha-D-ribose 1-diphosphate</name>
        <dbReference type="ChEBI" id="CHEBI:58017"/>
    </ligand>
</feature>
<comment type="function">
    <text evidence="1">Catalyzes the conversion of uracil and 5-phospho-alpha-D-ribose 1-diphosphate (PRPP) to UMP and diphosphate.</text>
</comment>
<comment type="catalytic activity">
    <reaction evidence="1">
        <text>UMP + diphosphate = 5-phospho-alpha-D-ribose 1-diphosphate + uracil</text>
        <dbReference type="Rhea" id="RHEA:13017"/>
        <dbReference type="ChEBI" id="CHEBI:17568"/>
        <dbReference type="ChEBI" id="CHEBI:33019"/>
        <dbReference type="ChEBI" id="CHEBI:57865"/>
        <dbReference type="ChEBI" id="CHEBI:58017"/>
        <dbReference type="EC" id="2.4.2.9"/>
    </reaction>
</comment>
<comment type="cofactor">
    <cofactor evidence="1">
        <name>Mg(2+)</name>
        <dbReference type="ChEBI" id="CHEBI:18420"/>
    </cofactor>
    <text evidence="1">Binds 1 Mg(2+) ion per subunit. The magnesium is bound as Mg-PRPP.</text>
</comment>
<comment type="activity regulation">
    <text evidence="1">Allosterically activated by GTP.</text>
</comment>
<comment type="pathway">
    <text evidence="1">Pyrimidine metabolism; UMP biosynthesis via salvage pathway; UMP from uracil: step 1/1.</text>
</comment>
<comment type="similarity">
    <text evidence="1">Belongs to the UPRTase family.</text>
</comment>
<accession>A4VWM9</accession>
<evidence type="ECO:0000255" key="1">
    <source>
        <dbReference type="HAMAP-Rule" id="MF_01218"/>
    </source>
</evidence>
<proteinExistence type="inferred from homology"/>
<dbReference type="EC" id="2.4.2.9" evidence="1"/>
<dbReference type="EMBL" id="CP000407">
    <property type="protein sequence ID" value="ABP90518.1"/>
    <property type="molecule type" value="Genomic_DNA"/>
</dbReference>
<dbReference type="SMR" id="A4VWM9"/>
<dbReference type="STRING" id="391295.SSU05_1553"/>
<dbReference type="KEGG" id="ssu:SSU05_1553"/>
<dbReference type="eggNOG" id="COG0035">
    <property type="taxonomic scope" value="Bacteria"/>
</dbReference>
<dbReference type="HOGENOM" id="CLU_067096_2_2_9"/>
<dbReference type="UniPathway" id="UPA00574">
    <property type="reaction ID" value="UER00636"/>
</dbReference>
<dbReference type="GO" id="GO:0005525">
    <property type="term" value="F:GTP binding"/>
    <property type="evidence" value="ECO:0007669"/>
    <property type="project" value="UniProtKB-KW"/>
</dbReference>
<dbReference type="GO" id="GO:0000287">
    <property type="term" value="F:magnesium ion binding"/>
    <property type="evidence" value="ECO:0007669"/>
    <property type="project" value="UniProtKB-UniRule"/>
</dbReference>
<dbReference type="GO" id="GO:0004845">
    <property type="term" value="F:uracil phosphoribosyltransferase activity"/>
    <property type="evidence" value="ECO:0007669"/>
    <property type="project" value="UniProtKB-UniRule"/>
</dbReference>
<dbReference type="GO" id="GO:0044206">
    <property type="term" value="P:UMP salvage"/>
    <property type="evidence" value="ECO:0007669"/>
    <property type="project" value="UniProtKB-UniRule"/>
</dbReference>
<dbReference type="GO" id="GO:0006223">
    <property type="term" value="P:uracil salvage"/>
    <property type="evidence" value="ECO:0007669"/>
    <property type="project" value="InterPro"/>
</dbReference>
<dbReference type="CDD" id="cd06223">
    <property type="entry name" value="PRTases_typeI"/>
    <property type="match status" value="1"/>
</dbReference>
<dbReference type="FunFam" id="3.40.50.2020:FF:000003">
    <property type="entry name" value="Uracil phosphoribosyltransferase"/>
    <property type="match status" value="1"/>
</dbReference>
<dbReference type="Gene3D" id="3.40.50.2020">
    <property type="match status" value="1"/>
</dbReference>
<dbReference type="HAMAP" id="MF_01218_B">
    <property type="entry name" value="Upp_B"/>
    <property type="match status" value="1"/>
</dbReference>
<dbReference type="InterPro" id="IPR000836">
    <property type="entry name" value="PRibTrfase_dom"/>
</dbReference>
<dbReference type="InterPro" id="IPR029057">
    <property type="entry name" value="PRTase-like"/>
</dbReference>
<dbReference type="InterPro" id="IPR034332">
    <property type="entry name" value="Upp_B"/>
</dbReference>
<dbReference type="InterPro" id="IPR050054">
    <property type="entry name" value="UPRTase/APRTase"/>
</dbReference>
<dbReference type="InterPro" id="IPR005765">
    <property type="entry name" value="Ura_phspho_trans"/>
</dbReference>
<dbReference type="NCBIfam" id="NF001097">
    <property type="entry name" value="PRK00129.1"/>
    <property type="match status" value="1"/>
</dbReference>
<dbReference type="NCBIfam" id="TIGR01091">
    <property type="entry name" value="upp"/>
    <property type="match status" value="1"/>
</dbReference>
<dbReference type="PANTHER" id="PTHR32315">
    <property type="entry name" value="ADENINE PHOSPHORIBOSYLTRANSFERASE"/>
    <property type="match status" value="1"/>
</dbReference>
<dbReference type="PANTHER" id="PTHR32315:SF4">
    <property type="entry name" value="URACIL PHOSPHORIBOSYLTRANSFERASE, CHLOROPLASTIC"/>
    <property type="match status" value="1"/>
</dbReference>
<dbReference type="Pfam" id="PF14681">
    <property type="entry name" value="UPRTase"/>
    <property type="match status" value="1"/>
</dbReference>
<dbReference type="SUPFAM" id="SSF53271">
    <property type="entry name" value="PRTase-like"/>
    <property type="match status" value="1"/>
</dbReference>
<organism>
    <name type="scientific">Streptococcus suis (strain 05ZYH33)</name>
    <dbReference type="NCBI Taxonomy" id="391295"/>
    <lineage>
        <taxon>Bacteria</taxon>
        <taxon>Bacillati</taxon>
        <taxon>Bacillota</taxon>
        <taxon>Bacilli</taxon>
        <taxon>Lactobacillales</taxon>
        <taxon>Streptococcaceae</taxon>
        <taxon>Streptococcus</taxon>
    </lineage>
</organism>
<name>UPP_STRSY</name>
<protein>
    <recommendedName>
        <fullName evidence="1">Uracil phosphoribosyltransferase</fullName>
        <ecNumber evidence="1">2.4.2.9</ecNumber>
    </recommendedName>
    <alternativeName>
        <fullName evidence="1">UMP pyrophosphorylase</fullName>
    </alternativeName>
    <alternativeName>
        <fullName evidence="1">UPRTase</fullName>
    </alternativeName>
</protein>